<comment type="function">
    <text evidence="1">Functions as a transport protein in the blood stream. Binds various ligands in the interior of its beta-barrel domain (By similarity). Appears to function in modulating the activity of the immune system during the acute-phase reaction.</text>
</comment>
<comment type="subcellular location">
    <subcellularLocation>
        <location>Secreted</location>
    </subcellularLocation>
</comment>
<comment type="tissue specificity">
    <text>Expressed by the liver and secreted in plasma.</text>
</comment>
<comment type="induction">
    <text>Synthesis is controlled by glucocorticoids, interleukin-1 and interleukin-6, It increases 5- to 50-fold upon inflammation.</text>
</comment>
<comment type="domain">
    <text evidence="1">Contains a beta-barrel that binds various ligands in its interior.</text>
</comment>
<comment type="similarity">
    <text evidence="6">Belongs to the calycin superfamily. Lipocalin family.</text>
</comment>
<keyword id="KW-0011">Acute phase</keyword>
<keyword id="KW-1015">Disulfide bond</keyword>
<keyword id="KW-0325">Glycoprotein</keyword>
<keyword id="KW-0873">Pyrrolidone carboxylic acid</keyword>
<keyword id="KW-1185">Reference proteome</keyword>
<keyword id="KW-0964">Secreted</keyword>
<keyword id="KW-0732">Signal</keyword>
<keyword id="KW-0813">Transport</keyword>
<evidence type="ECO:0000250" key="1"/>
<evidence type="ECO:0000250" key="2">
    <source>
        <dbReference type="UniProtKB" id="P19652"/>
    </source>
</evidence>
<evidence type="ECO:0000255" key="3"/>
<evidence type="ECO:0000256" key="4">
    <source>
        <dbReference type="SAM" id="MobiDB-lite"/>
    </source>
</evidence>
<evidence type="ECO:0000269" key="5">
    <source>
    </source>
</evidence>
<evidence type="ECO:0000305" key="6"/>
<name>A1AG2_MOUSE</name>
<gene>
    <name type="primary">Orm2</name>
    <name type="synonym">Agp-2</name>
    <name type="synonym">Orm-2</name>
</gene>
<sequence>MALHMILVMVSLLPLLEAQNPEHVNITIGDPITNETLSWLSDKWFFIGAAVLNPDYRQEIQKTQMVFFNLTPNLINDTMELREYHTIDDHCVYNSTHLGIQRENGTLSKYVGGVKIFADLIVLKMHGAFMLAFDLKDEKKRGLSLNAKRPDITPELREVFQKAVTHVGMDESEIIFVDWKKDRCSQQEKQQLELEKETKKDPEEGQA</sequence>
<organism>
    <name type="scientific">Mus musculus</name>
    <name type="common">Mouse</name>
    <dbReference type="NCBI Taxonomy" id="10090"/>
    <lineage>
        <taxon>Eukaryota</taxon>
        <taxon>Metazoa</taxon>
        <taxon>Chordata</taxon>
        <taxon>Craniata</taxon>
        <taxon>Vertebrata</taxon>
        <taxon>Euteleostomi</taxon>
        <taxon>Mammalia</taxon>
        <taxon>Eutheria</taxon>
        <taxon>Euarchontoglires</taxon>
        <taxon>Glires</taxon>
        <taxon>Rodentia</taxon>
        <taxon>Myomorpha</taxon>
        <taxon>Muroidea</taxon>
        <taxon>Muridae</taxon>
        <taxon>Murinae</taxon>
        <taxon>Mus</taxon>
        <taxon>Mus</taxon>
    </lineage>
</organism>
<protein>
    <recommendedName>
        <fullName>Alpha-1-acid glycoprotein 2</fullName>
        <shortName>AGP 2</shortName>
    </recommendedName>
    <alternativeName>
        <fullName>Orosomucoid-2</fullName>
        <shortName>OMD 2</shortName>
    </alternativeName>
</protein>
<dbReference type="EMBL" id="M17376">
    <property type="protein sequence ID" value="AAA37193.1"/>
    <property type="molecule type" value="Genomic_DNA"/>
</dbReference>
<dbReference type="EMBL" id="M27009">
    <property type="protein sequence ID" value="AAA37196.1"/>
    <property type="molecule type" value="mRNA"/>
</dbReference>
<dbReference type="EMBL" id="BC057985">
    <property type="protein sequence ID" value="AAH57985.1"/>
    <property type="molecule type" value="mRNA"/>
</dbReference>
<dbReference type="EMBL" id="M12566">
    <property type="protein sequence ID" value="AAA91744.1"/>
    <property type="molecule type" value="mRNA"/>
</dbReference>
<dbReference type="CCDS" id="CCDS18253.1"/>
<dbReference type="PIR" id="A29294">
    <property type="entry name" value="OMMS1"/>
</dbReference>
<dbReference type="RefSeq" id="NP_035146.1">
    <property type="nucleotide sequence ID" value="NM_011016.2"/>
</dbReference>
<dbReference type="SMR" id="P07361"/>
<dbReference type="FunCoup" id="P07361">
    <property type="interactions" value="442"/>
</dbReference>
<dbReference type="STRING" id="10090.ENSMUSP00000074810"/>
<dbReference type="GlyCosmos" id="P07361">
    <property type="glycosylation" value="5 sites, No reported glycans"/>
</dbReference>
<dbReference type="GlyGen" id="P07361">
    <property type="glycosylation" value="5 sites"/>
</dbReference>
<dbReference type="iPTMnet" id="P07361"/>
<dbReference type="PhosphoSitePlus" id="P07361"/>
<dbReference type="CPTAC" id="non-CPTAC-3307"/>
<dbReference type="CPTAC" id="non-CPTAC-3368"/>
<dbReference type="jPOST" id="P07361"/>
<dbReference type="PaxDb" id="10090-ENSMUSP00000074810"/>
<dbReference type="PeptideAtlas" id="P07361"/>
<dbReference type="ProteomicsDB" id="285693"/>
<dbReference type="DNASU" id="18406"/>
<dbReference type="Ensembl" id="ENSMUST00000075341.4">
    <property type="protein sequence ID" value="ENSMUSP00000074810.4"/>
    <property type="gene ID" value="ENSMUSG00000061540.4"/>
</dbReference>
<dbReference type="GeneID" id="18406"/>
<dbReference type="KEGG" id="mmu:18406"/>
<dbReference type="UCSC" id="uc008tga.1">
    <property type="organism name" value="mouse"/>
</dbReference>
<dbReference type="AGR" id="MGI:97444"/>
<dbReference type="CTD" id="5005"/>
<dbReference type="MGI" id="MGI:97444">
    <property type="gene designation" value="Orm2"/>
</dbReference>
<dbReference type="VEuPathDB" id="HostDB:ENSMUSG00000061540"/>
<dbReference type="eggNOG" id="ENOG502S0Q2">
    <property type="taxonomic scope" value="Eukaryota"/>
</dbReference>
<dbReference type="GeneTree" id="ENSGT00390000012130"/>
<dbReference type="HOGENOM" id="CLU_117688_0_0_1"/>
<dbReference type="InParanoid" id="P07361"/>
<dbReference type="OMA" id="NWGLSFY"/>
<dbReference type="OrthoDB" id="9448848at2759"/>
<dbReference type="PhylomeDB" id="P07361"/>
<dbReference type="TreeFam" id="TF343791"/>
<dbReference type="Reactome" id="R-MMU-114608">
    <property type="pathway name" value="Platelet degranulation"/>
</dbReference>
<dbReference type="Reactome" id="R-MMU-6798695">
    <property type="pathway name" value="Neutrophil degranulation"/>
</dbReference>
<dbReference type="BioGRID-ORCS" id="18406">
    <property type="hits" value="3 hits in 79 CRISPR screens"/>
</dbReference>
<dbReference type="ChiTaRS" id="Orm2">
    <property type="organism name" value="mouse"/>
</dbReference>
<dbReference type="PRO" id="PR:P07361"/>
<dbReference type="Proteomes" id="UP000000589">
    <property type="component" value="Chromosome 4"/>
</dbReference>
<dbReference type="RNAct" id="P07361">
    <property type="molecule type" value="protein"/>
</dbReference>
<dbReference type="Bgee" id="ENSMUSG00000061540">
    <property type="expression patterns" value="Expressed in left lobe of liver and 41 other cell types or tissues"/>
</dbReference>
<dbReference type="GO" id="GO:0005615">
    <property type="term" value="C:extracellular space"/>
    <property type="evidence" value="ECO:0007669"/>
    <property type="project" value="InterPro"/>
</dbReference>
<dbReference type="GO" id="GO:0006953">
    <property type="term" value="P:acute-phase response"/>
    <property type="evidence" value="ECO:0007669"/>
    <property type="project" value="UniProtKB-KW"/>
</dbReference>
<dbReference type="GO" id="GO:0002682">
    <property type="term" value="P:regulation of immune system process"/>
    <property type="evidence" value="ECO:0007669"/>
    <property type="project" value="InterPro"/>
</dbReference>
<dbReference type="CDD" id="cd19451">
    <property type="entry name" value="lipocalin_AGP-like"/>
    <property type="match status" value="1"/>
</dbReference>
<dbReference type="FunFam" id="2.40.128.20:FF:000012">
    <property type="entry name" value="Alpha-1-acid glycoprotein 2"/>
    <property type="match status" value="1"/>
</dbReference>
<dbReference type="Gene3D" id="2.40.128.20">
    <property type="match status" value="1"/>
</dbReference>
<dbReference type="InterPro" id="IPR001500">
    <property type="entry name" value="A1A_glycop"/>
</dbReference>
<dbReference type="InterPro" id="IPR012674">
    <property type="entry name" value="Calycin"/>
</dbReference>
<dbReference type="InterPro" id="IPR000566">
    <property type="entry name" value="Lipocln_cytosolic_FA-bd_dom"/>
</dbReference>
<dbReference type="PANTHER" id="PTHR11967">
    <property type="entry name" value="ALPHA-1-ACID GLYCOPROTEIN"/>
    <property type="match status" value="1"/>
</dbReference>
<dbReference type="PANTHER" id="PTHR11967:SF2">
    <property type="entry name" value="ALPHA-1-ACID GLYCOPROTEIN 1"/>
    <property type="match status" value="1"/>
</dbReference>
<dbReference type="Pfam" id="PF00061">
    <property type="entry name" value="Lipocalin"/>
    <property type="match status" value="1"/>
</dbReference>
<dbReference type="PIRSF" id="PIRSF036899">
    <property type="entry name" value="AGP"/>
    <property type="match status" value="1"/>
</dbReference>
<dbReference type="PRINTS" id="PR00708">
    <property type="entry name" value="A1AGLPROTEIN"/>
</dbReference>
<dbReference type="SUPFAM" id="SSF50814">
    <property type="entry name" value="Lipocalins"/>
    <property type="match status" value="1"/>
</dbReference>
<feature type="signal peptide">
    <location>
        <begin position="1"/>
        <end position="18"/>
    </location>
</feature>
<feature type="chain" id="PRO_0000017863" description="Alpha-1-acid glycoprotein 2">
    <location>
        <begin position="19"/>
        <end position="207"/>
    </location>
</feature>
<feature type="region of interest" description="Disordered" evidence="4">
    <location>
        <begin position="188"/>
        <end position="207"/>
    </location>
</feature>
<feature type="modified residue" description="Pyrrolidone carboxylic acid" evidence="2">
    <location>
        <position position="19"/>
    </location>
</feature>
<feature type="glycosylation site" description="N-linked (GlcNAc...) asparagine" evidence="3">
    <location>
        <position position="25"/>
    </location>
</feature>
<feature type="glycosylation site" description="N-linked (GlcNAc...) asparagine" evidence="3">
    <location>
        <position position="34"/>
    </location>
</feature>
<feature type="glycosylation site" description="N-linked (GlcNAc...) asparagine" evidence="5">
    <location>
        <position position="76"/>
    </location>
</feature>
<feature type="glycosylation site" description="N-linked (GlcNAc...) asparagine" evidence="3">
    <location>
        <position position="94"/>
    </location>
</feature>
<feature type="glycosylation site" description="N-linked (GlcNAc...) asparagine" evidence="3">
    <location>
        <position position="104"/>
    </location>
</feature>
<feature type="disulfide bond" evidence="1">
    <location>
        <begin position="91"/>
        <end position="184"/>
    </location>
</feature>
<reference key="1">
    <citation type="journal article" date="1987" name="Biochemistry">
        <title>Nucleotide sequence of the mouse alpha 1-acid glycoprotein gene 1.</title>
        <authorList>
            <person name="Cooper R."/>
            <person name="Eckley D.M."/>
            <person name="Papaconstantinou J."/>
        </authorList>
    </citation>
    <scope>NUCLEOTIDE SEQUENCE [GENOMIC DNA]</scope>
    <source>
        <strain>BALB/cJ</strain>
    </source>
</reference>
<reference key="2">
    <citation type="journal article" date="1989" name="DNA">
        <title>Molecular cloning of cDNAs corresponding to two genes of alpha 1-acid glycoprotein and characterization of two alleles of AGP-1 in the mouse.</title>
        <authorList>
            <person name="Lee S.C."/>
            <person name="Chang C.J."/>
            <person name="Lee Y.M."/>
            <person name="Lei H.Y."/>
            <person name="Lai M.Y."/>
            <person name="Chen D.S."/>
        </authorList>
    </citation>
    <scope>NUCLEOTIDE SEQUENCE [MRNA]</scope>
</reference>
<reference key="3">
    <citation type="journal article" date="2004" name="Genome Res.">
        <title>The status, quality, and expansion of the NIH full-length cDNA project: the Mammalian Gene Collection (MGC).</title>
        <authorList>
            <consortium name="The MGC Project Team"/>
        </authorList>
    </citation>
    <scope>NUCLEOTIDE SEQUENCE [LARGE SCALE MRNA]</scope>
    <source>
        <strain>FVB/N</strain>
        <tissue>Liver</tissue>
    </source>
</reference>
<reference key="4">
    <citation type="journal article" date="1986" name="J. Biol. Chem.">
        <title>Evidence for the existence of multiple alpha 1-acid glycoprotein genes in the mouse.</title>
        <authorList>
            <person name="Cooper R."/>
            <person name="Papaconstantinou J."/>
        </authorList>
    </citation>
    <scope>NUCLEOTIDE SEQUENCE [MRNA] OF 70-207</scope>
</reference>
<reference key="5">
    <citation type="journal article" date="2006" name="J. Proteome Res.">
        <title>Proteome-wide characterization of N-glycosylation events by diagonal chromatography.</title>
        <authorList>
            <person name="Ghesquiere B."/>
            <person name="Van Damme J."/>
            <person name="Martens L."/>
            <person name="Vandekerckhove J."/>
            <person name="Gevaert K."/>
        </authorList>
    </citation>
    <scope>GLYCOSYLATION [LARGE SCALE ANALYSIS] AT ASN-76</scope>
    <source>
        <strain>C57BL/6J</strain>
        <tissue>Plasma</tissue>
    </source>
</reference>
<accession>P07361</accession>
<proteinExistence type="evidence at protein level"/>